<gene>
    <name evidence="1" type="primary">purR</name>
    <name type="ordered locus">SPA1423</name>
</gene>
<name>PURR_SALPA</name>
<sequence>MATIKDVAKRANVSTTTVSHVINKTRFVAEETRNAVWTAIKELHYSPSAVARSLKVNHTKSIGLLATSSEAAYFAEIIEAVEKNCFQKGYTLILGNAWNNLEKQRAYLSMMAQKRVDGLLVMCSEYPEPLLSMLEEYRHIPMVVMDWGEAKADFTDTVIDNAFAGGYMAGRYLVERGHRDIGVIPGPLERNTGAGRLAGFMKAMEEALINVPDNWIVQGDFEPESGYHAMQQILSQSHRPTAVFCGGDIMAMGALCAADEMGLRVPQDVSVIGYDNVRNARYFTPALTTIHQPKDSLGETAFNMLLDRIVNKREESQSIEVHPRLVERRSVADGPFRDYRR</sequence>
<comment type="function">
    <text evidence="1">Is the main repressor of the genes involved in the de novo synthesis of purine nucleotides, regulating purB, purC, purEK, purF, purHD, purL, purMN and guaBA expression. PurR is allosterically activated to bind its cognate DNA by binding the purine corepressors, hypoxanthine or guanine, thereby effecting transcription repression.</text>
</comment>
<comment type="pathway">
    <text>Purine metabolism; purine nucleotide biosynthesis [regulation].</text>
</comment>
<comment type="subunit">
    <text evidence="1">Homodimer.</text>
</comment>
<comment type="domain">
    <text evidence="1">Consists of two structural and functional domains: an N-terminal DNA-binding domain, approximately the first 60 residues, and a larger C-terminal domain, approximately 280 residues, which imparts the function of corepressor binding and oligomerization.</text>
</comment>
<keyword id="KW-0238">DNA-binding</keyword>
<keyword id="KW-0658">Purine biosynthesis</keyword>
<keyword id="KW-0678">Repressor</keyword>
<keyword id="KW-0804">Transcription</keyword>
<keyword id="KW-0805">Transcription regulation</keyword>
<proteinExistence type="inferred from homology"/>
<organism>
    <name type="scientific">Salmonella paratyphi A (strain ATCC 9150 / SARB42)</name>
    <dbReference type="NCBI Taxonomy" id="295319"/>
    <lineage>
        <taxon>Bacteria</taxon>
        <taxon>Pseudomonadati</taxon>
        <taxon>Pseudomonadota</taxon>
        <taxon>Gammaproteobacteria</taxon>
        <taxon>Enterobacterales</taxon>
        <taxon>Enterobacteriaceae</taxon>
        <taxon>Salmonella</taxon>
    </lineage>
</organism>
<protein>
    <recommendedName>
        <fullName evidence="1">HTH-type transcriptional repressor PurR</fullName>
    </recommendedName>
    <alternativeName>
        <fullName evidence="1">Pur regulon repressor</fullName>
    </alternativeName>
    <alternativeName>
        <fullName evidence="1">Purine nucleotide synthesis repressor</fullName>
    </alternativeName>
</protein>
<reference key="1">
    <citation type="journal article" date="2004" name="Nat. Genet.">
        <title>Comparison of genome degradation in Paratyphi A and Typhi, human-restricted serovars of Salmonella enterica that cause typhoid.</title>
        <authorList>
            <person name="McClelland M."/>
            <person name="Sanderson K.E."/>
            <person name="Clifton S.W."/>
            <person name="Latreille P."/>
            <person name="Porwollik S."/>
            <person name="Sabo A."/>
            <person name="Meyer R."/>
            <person name="Bieri T."/>
            <person name="Ozersky P."/>
            <person name="McLellan M."/>
            <person name="Harkins C.R."/>
            <person name="Wang C."/>
            <person name="Nguyen C."/>
            <person name="Berghoff A."/>
            <person name="Elliott G."/>
            <person name="Kohlberg S."/>
            <person name="Strong C."/>
            <person name="Du F."/>
            <person name="Carter J."/>
            <person name="Kremizki C."/>
            <person name="Layman D."/>
            <person name="Leonard S."/>
            <person name="Sun H."/>
            <person name="Fulton L."/>
            <person name="Nash W."/>
            <person name="Miner T."/>
            <person name="Minx P."/>
            <person name="Delehaunty K."/>
            <person name="Fronick C."/>
            <person name="Magrini V."/>
            <person name="Nhan M."/>
            <person name="Warren W."/>
            <person name="Florea L."/>
            <person name="Spieth J."/>
            <person name="Wilson R.K."/>
        </authorList>
    </citation>
    <scope>NUCLEOTIDE SEQUENCE [LARGE SCALE GENOMIC DNA]</scope>
    <source>
        <strain>ATCC 9150 / SARB42</strain>
    </source>
</reference>
<dbReference type="EMBL" id="CP000026">
    <property type="protein sequence ID" value="AAV77364.1"/>
    <property type="molecule type" value="Genomic_DNA"/>
</dbReference>
<dbReference type="RefSeq" id="WP_000190998.1">
    <property type="nucleotide sequence ID" value="NC_006511.1"/>
</dbReference>
<dbReference type="SMR" id="Q5PH15"/>
<dbReference type="KEGG" id="spt:SPA1423"/>
<dbReference type="HOGENOM" id="CLU_037628_6_2_6"/>
<dbReference type="UniPathway" id="UPA00488"/>
<dbReference type="Proteomes" id="UP000008185">
    <property type="component" value="Chromosome"/>
</dbReference>
<dbReference type="GO" id="GO:0003700">
    <property type="term" value="F:DNA-binding transcription factor activity"/>
    <property type="evidence" value="ECO:0007669"/>
    <property type="project" value="TreeGrafter"/>
</dbReference>
<dbReference type="GO" id="GO:0000976">
    <property type="term" value="F:transcription cis-regulatory region binding"/>
    <property type="evidence" value="ECO:0007669"/>
    <property type="project" value="TreeGrafter"/>
</dbReference>
<dbReference type="GO" id="GO:0045892">
    <property type="term" value="P:negative regulation of DNA-templated transcription"/>
    <property type="evidence" value="ECO:0007669"/>
    <property type="project" value="UniProtKB-UniRule"/>
</dbReference>
<dbReference type="GO" id="GO:0006164">
    <property type="term" value="P:purine nucleotide biosynthetic process"/>
    <property type="evidence" value="ECO:0007669"/>
    <property type="project" value="UniProtKB-UniPathway"/>
</dbReference>
<dbReference type="CDD" id="cd01392">
    <property type="entry name" value="HTH_LacI"/>
    <property type="match status" value="1"/>
</dbReference>
<dbReference type="CDD" id="cd06275">
    <property type="entry name" value="PBP1_PurR"/>
    <property type="match status" value="1"/>
</dbReference>
<dbReference type="FunFam" id="1.10.260.40:FF:000002">
    <property type="entry name" value="HTH-type transcriptional repressor PurR"/>
    <property type="match status" value="1"/>
</dbReference>
<dbReference type="FunFam" id="3.40.50.2300:FF:000045">
    <property type="entry name" value="HTH-type transcriptional repressor PurR"/>
    <property type="match status" value="1"/>
</dbReference>
<dbReference type="Gene3D" id="3.40.50.2300">
    <property type="match status" value="2"/>
</dbReference>
<dbReference type="Gene3D" id="1.10.260.40">
    <property type="entry name" value="lambda repressor-like DNA-binding domains"/>
    <property type="match status" value="1"/>
</dbReference>
<dbReference type="HAMAP" id="MF_01277">
    <property type="entry name" value="HTH_type_PurR"/>
    <property type="match status" value="1"/>
</dbReference>
<dbReference type="InterPro" id="IPR000843">
    <property type="entry name" value="HTH_LacI"/>
</dbReference>
<dbReference type="InterPro" id="IPR046335">
    <property type="entry name" value="LacI/GalR-like_sensor"/>
</dbReference>
<dbReference type="InterPro" id="IPR010982">
    <property type="entry name" value="Lambda_DNA-bd_dom_sf"/>
</dbReference>
<dbReference type="InterPro" id="IPR028082">
    <property type="entry name" value="Peripla_BP_I"/>
</dbReference>
<dbReference type="InterPro" id="IPR023588">
    <property type="entry name" value="Tscrpt_reg_HTH_PurR"/>
</dbReference>
<dbReference type="NCBIfam" id="NF007979">
    <property type="entry name" value="PRK10703.1"/>
    <property type="match status" value="1"/>
</dbReference>
<dbReference type="PANTHER" id="PTHR30146:SF148">
    <property type="entry name" value="HTH-TYPE TRANSCRIPTIONAL REPRESSOR PURR-RELATED"/>
    <property type="match status" value="1"/>
</dbReference>
<dbReference type="PANTHER" id="PTHR30146">
    <property type="entry name" value="LACI-RELATED TRANSCRIPTIONAL REPRESSOR"/>
    <property type="match status" value="1"/>
</dbReference>
<dbReference type="Pfam" id="PF00356">
    <property type="entry name" value="LacI"/>
    <property type="match status" value="1"/>
</dbReference>
<dbReference type="Pfam" id="PF13377">
    <property type="entry name" value="Peripla_BP_3"/>
    <property type="match status" value="1"/>
</dbReference>
<dbReference type="PRINTS" id="PR00036">
    <property type="entry name" value="HTHLACI"/>
</dbReference>
<dbReference type="SMART" id="SM00354">
    <property type="entry name" value="HTH_LACI"/>
    <property type="match status" value="1"/>
</dbReference>
<dbReference type="SUPFAM" id="SSF47413">
    <property type="entry name" value="lambda repressor-like DNA-binding domains"/>
    <property type="match status" value="1"/>
</dbReference>
<dbReference type="SUPFAM" id="SSF53822">
    <property type="entry name" value="Periplasmic binding protein-like I"/>
    <property type="match status" value="1"/>
</dbReference>
<dbReference type="PROSITE" id="PS00356">
    <property type="entry name" value="HTH_LACI_1"/>
    <property type="match status" value="1"/>
</dbReference>
<dbReference type="PROSITE" id="PS50932">
    <property type="entry name" value="HTH_LACI_2"/>
    <property type="match status" value="1"/>
</dbReference>
<accession>Q5PH15</accession>
<feature type="chain" id="PRO_0000279666" description="HTH-type transcriptional repressor PurR">
    <location>
        <begin position="1"/>
        <end position="341"/>
    </location>
</feature>
<feature type="domain" description="HTH lacI-type" evidence="1">
    <location>
        <begin position="2"/>
        <end position="56"/>
    </location>
</feature>
<feature type="DNA-binding region" description="H-T-H motif" evidence="1">
    <location>
        <begin position="4"/>
        <end position="23"/>
    </location>
</feature>
<feature type="DNA-binding region" evidence="1">
    <location>
        <begin position="48"/>
        <end position="56"/>
    </location>
</feature>
<feature type="binding site" evidence="1">
    <location>
        <position position="73"/>
    </location>
    <ligand>
        <name>hypoxanthine</name>
        <dbReference type="ChEBI" id="CHEBI:17368"/>
    </ligand>
</feature>
<feature type="binding site" evidence="1">
    <location>
        <position position="190"/>
    </location>
    <ligand>
        <name>hypoxanthine</name>
        <dbReference type="ChEBI" id="CHEBI:17368"/>
    </ligand>
</feature>
<feature type="binding site" evidence="1">
    <location>
        <position position="192"/>
    </location>
    <ligand>
        <name>hypoxanthine</name>
        <dbReference type="ChEBI" id="CHEBI:17368"/>
    </ligand>
</feature>
<feature type="binding site" evidence="1">
    <location>
        <position position="221"/>
    </location>
    <ligand>
        <name>hypoxanthine</name>
        <dbReference type="ChEBI" id="CHEBI:17368"/>
    </ligand>
</feature>
<feature type="binding site" evidence="1">
    <location>
        <position position="275"/>
    </location>
    <ligand>
        <name>hypoxanthine</name>
        <dbReference type="ChEBI" id="CHEBI:17368"/>
    </ligand>
</feature>
<evidence type="ECO:0000255" key="1">
    <source>
        <dbReference type="HAMAP-Rule" id="MF_01277"/>
    </source>
</evidence>